<organism>
    <name type="scientific">Saccharolobus islandicus (strain Y.G.57.14 / Yellowstone #1)</name>
    <name type="common">Sulfolobus islandicus</name>
    <dbReference type="NCBI Taxonomy" id="439386"/>
    <lineage>
        <taxon>Archaea</taxon>
        <taxon>Thermoproteota</taxon>
        <taxon>Thermoprotei</taxon>
        <taxon>Sulfolobales</taxon>
        <taxon>Sulfolobaceae</taxon>
        <taxon>Saccharolobus</taxon>
    </lineage>
</organism>
<comment type="function">
    <text evidence="1">Catalyzes the decarboxylation of S-adenosylmethionine to S-adenosylmethioninamine (dcAdoMet), the propylamine donor required for the synthesis of the polyamines spermine and spermidine from the diamine putrescine.</text>
</comment>
<comment type="catalytic activity">
    <reaction evidence="1">
        <text>S-adenosyl-L-methionine + H(+) = S-adenosyl 3-(methylsulfanyl)propylamine + CO2</text>
        <dbReference type="Rhea" id="RHEA:15981"/>
        <dbReference type="ChEBI" id="CHEBI:15378"/>
        <dbReference type="ChEBI" id="CHEBI:16526"/>
        <dbReference type="ChEBI" id="CHEBI:57443"/>
        <dbReference type="ChEBI" id="CHEBI:59789"/>
        <dbReference type="EC" id="4.1.1.50"/>
    </reaction>
</comment>
<comment type="cofactor">
    <cofactor evidence="1">
        <name>pyruvate</name>
        <dbReference type="ChEBI" id="CHEBI:15361"/>
    </cofactor>
    <text evidence="1">Binds 1 pyruvoyl group covalently per subunit.</text>
</comment>
<comment type="pathway">
    <text evidence="1">Amine and polyamine biosynthesis; S-adenosylmethioninamine biosynthesis; S-adenosylmethioninamine from S-adenosyl-L-methionine: step 1/1.</text>
</comment>
<comment type="subunit">
    <text evidence="1">Heterotetramer of two alpha and two beta chains arranged as a dimer of alpha/beta heterodimers.</text>
</comment>
<comment type="PTM">
    <text evidence="1">Is synthesized initially as an inactive proenzyme. Formation of the active enzyme involves a self-maturation process in which the active site pyruvoyl group is generated from an internal serine residue via an autocatalytic post-translational modification. Two non-identical subunits are generated from the proenzyme in this reaction, and the pyruvate is formed at the N-terminus of the alpha chain, which is derived from the carboxyl end of the proenzyme. The post-translation cleavage follows an unusual pathway, termed non-hydrolytic serinolysis, in which the side chain hydroxyl group of the serine supplies its oxygen atom to form the C-terminus of the beta chain, while the remainder of the serine residue undergoes an oxidative deamination to produce ammonia and the pyruvoyl group blocking the N-terminus of the alpha chain.</text>
</comment>
<comment type="similarity">
    <text evidence="1">Belongs to the prokaryotic AdoMetDC family. Type 1 subfamily.</text>
</comment>
<feature type="chain" id="PRO_1000206318" description="S-adenosylmethionine decarboxylase beta chain" evidence="1">
    <location>
        <begin position="1"/>
        <end position="68"/>
    </location>
</feature>
<feature type="chain" id="PRO_1000206319" description="S-adenosylmethionine decarboxylase alpha chain" evidence="1">
    <location>
        <begin position="69"/>
        <end position="122"/>
    </location>
</feature>
<feature type="active site" description="Schiff-base intermediate with substrate; via pyruvic acid" evidence="1">
    <location>
        <position position="69"/>
    </location>
</feature>
<feature type="active site" description="Proton acceptor; for processing activity" evidence="1">
    <location>
        <position position="74"/>
    </location>
</feature>
<feature type="active site" description="Proton donor; for catalytic activity" evidence="1">
    <location>
        <position position="89"/>
    </location>
</feature>
<feature type="site" description="Cleavage (non-hydrolytic); by autolysis" evidence="1">
    <location>
        <begin position="68"/>
        <end position="69"/>
    </location>
</feature>
<feature type="modified residue" description="Pyruvic acid (Ser); by autocatalysis" evidence="1">
    <location>
        <position position="69"/>
    </location>
</feature>
<gene>
    <name evidence="1" type="primary">speH</name>
    <name type="ordered locus">YG5714_1550</name>
</gene>
<name>SPEH_SACI7</name>
<dbReference type="EC" id="4.1.1.50" evidence="1"/>
<dbReference type="EMBL" id="CP001403">
    <property type="protein sequence ID" value="ACP45812.1"/>
    <property type="molecule type" value="Genomic_DNA"/>
</dbReference>
<dbReference type="SMR" id="C3NES3"/>
<dbReference type="KEGG" id="siy:YG5714_1550"/>
<dbReference type="HOGENOM" id="CLU_125470_2_1_2"/>
<dbReference type="UniPathway" id="UPA00331">
    <property type="reaction ID" value="UER00451"/>
</dbReference>
<dbReference type="Proteomes" id="UP000002308">
    <property type="component" value="Chromosome"/>
</dbReference>
<dbReference type="GO" id="GO:0005829">
    <property type="term" value="C:cytosol"/>
    <property type="evidence" value="ECO:0007669"/>
    <property type="project" value="TreeGrafter"/>
</dbReference>
<dbReference type="GO" id="GO:0004014">
    <property type="term" value="F:adenosylmethionine decarboxylase activity"/>
    <property type="evidence" value="ECO:0007669"/>
    <property type="project" value="UniProtKB-UniRule"/>
</dbReference>
<dbReference type="GO" id="GO:0008295">
    <property type="term" value="P:spermidine biosynthetic process"/>
    <property type="evidence" value="ECO:0007669"/>
    <property type="project" value="UniProtKB-UniRule"/>
</dbReference>
<dbReference type="FunFam" id="3.60.90.10:FF:000005">
    <property type="entry name" value="Arginine decarboxylase proenzyme"/>
    <property type="match status" value="1"/>
</dbReference>
<dbReference type="Gene3D" id="3.60.90.10">
    <property type="entry name" value="S-adenosylmethionine decarboxylase"/>
    <property type="match status" value="1"/>
</dbReference>
<dbReference type="HAMAP" id="MF_00464">
    <property type="entry name" value="AdoMetDC_1"/>
    <property type="match status" value="1"/>
</dbReference>
<dbReference type="InterPro" id="IPR003826">
    <property type="entry name" value="AdoMetDC_fam_prok"/>
</dbReference>
<dbReference type="InterPro" id="IPR016067">
    <property type="entry name" value="S-AdoMet_deCO2ase_core"/>
</dbReference>
<dbReference type="InterPro" id="IPR017716">
    <property type="entry name" value="S-AdoMet_deCOase_pro-enz"/>
</dbReference>
<dbReference type="NCBIfam" id="TIGR03330">
    <property type="entry name" value="SAM_DCase_Bsu"/>
    <property type="match status" value="1"/>
</dbReference>
<dbReference type="PANTHER" id="PTHR33866">
    <property type="entry name" value="S-ADENOSYLMETHIONINE DECARBOXYLASE PROENZYME"/>
    <property type="match status" value="1"/>
</dbReference>
<dbReference type="PANTHER" id="PTHR33866:SF2">
    <property type="entry name" value="S-ADENOSYLMETHIONINE DECARBOXYLASE PROENZYME"/>
    <property type="match status" value="1"/>
</dbReference>
<dbReference type="Pfam" id="PF02675">
    <property type="entry name" value="AdoMet_dc"/>
    <property type="match status" value="1"/>
</dbReference>
<dbReference type="SUPFAM" id="SSF56276">
    <property type="entry name" value="S-adenosylmethionine decarboxylase"/>
    <property type="match status" value="1"/>
</dbReference>
<proteinExistence type="inferred from homology"/>
<protein>
    <recommendedName>
        <fullName evidence="1">S-adenosylmethionine decarboxylase proenzyme</fullName>
        <shortName evidence="1">AdoMetDC</shortName>
        <shortName evidence="1">SAMDC</shortName>
        <ecNumber evidence="1">4.1.1.50</ecNumber>
    </recommendedName>
    <component>
        <recommendedName>
            <fullName evidence="1">S-adenosylmethionine decarboxylase beta chain</fullName>
        </recommendedName>
    </component>
    <component>
        <recommendedName>
            <fullName evidence="1">S-adenosylmethionine decarboxylase alpha chain</fullName>
        </recommendedName>
    </component>
</protein>
<reference key="1">
    <citation type="journal article" date="2009" name="Proc. Natl. Acad. Sci. U.S.A.">
        <title>Biogeography of the Sulfolobus islandicus pan-genome.</title>
        <authorList>
            <person name="Reno M.L."/>
            <person name="Held N.L."/>
            <person name="Fields C.J."/>
            <person name="Burke P.V."/>
            <person name="Whitaker R.J."/>
        </authorList>
    </citation>
    <scope>NUCLEOTIDE SEQUENCE [LARGE SCALE GENOMIC DNA]</scope>
    <source>
        <strain>Y.G.57.14 / Yellowstone #1</strain>
    </source>
</reference>
<evidence type="ECO:0000255" key="1">
    <source>
        <dbReference type="HAMAP-Rule" id="MF_00464"/>
    </source>
</evidence>
<sequence length="122" mass="13669">MGVELAFPKVVGKQVYGSLYDCDENVLKDTKRLEQIIKEAADVGNMNILDIKSWKIGEGVSVVAIILESHITIHTWPEYKFATVDVYSCGPHTSPLKAFNYIVEKLGAKKYTINEADRSSEF</sequence>
<keyword id="KW-0068">Autocatalytic cleavage</keyword>
<keyword id="KW-0210">Decarboxylase</keyword>
<keyword id="KW-0456">Lyase</keyword>
<keyword id="KW-0620">Polyamine biosynthesis</keyword>
<keyword id="KW-0670">Pyruvate</keyword>
<keyword id="KW-0949">S-adenosyl-L-methionine</keyword>
<keyword id="KW-0704">Schiff base</keyword>
<keyword id="KW-0745">Spermidine biosynthesis</keyword>
<keyword id="KW-0865">Zymogen</keyword>
<accession>C3NES3</accession>